<gene>
    <name evidence="1" type="primary">rplT</name>
    <name type="ordered locus">PsycPRwf_2317</name>
</gene>
<comment type="function">
    <text evidence="1">Binds directly to 23S ribosomal RNA and is necessary for the in vitro assembly process of the 50S ribosomal subunit. It is not involved in the protein synthesizing functions of that subunit.</text>
</comment>
<comment type="similarity">
    <text evidence="1">Belongs to the bacterial ribosomal protein bL20 family.</text>
</comment>
<name>RL20_PSYWF</name>
<sequence length="118" mass="13475">MARVKRGVQANRRHKKILKRAKGYYGARSRVYRVAVQAVTKAGQYAYRDRRNKKRTFRRLWIARINAGARLNGLSYSRFINGLKKANIEIDRRVLADIAMHDAAAFTALTEKAKAALA</sequence>
<proteinExistence type="inferred from homology"/>
<evidence type="ECO:0000255" key="1">
    <source>
        <dbReference type="HAMAP-Rule" id="MF_00382"/>
    </source>
</evidence>
<evidence type="ECO:0000305" key="2"/>
<feature type="chain" id="PRO_1000072185" description="Large ribosomal subunit protein bL20">
    <location>
        <begin position="1"/>
        <end position="118"/>
    </location>
</feature>
<reference key="1">
    <citation type="submission" date="2007-05" db="EMBL/GenBank/DDBJ databases">
        <title>Complete sequence of chromosome of Psychrobacter sp. PRwf-1.</title>
        <authorList>
            <consortium name="US DOE Joint Genome Institute"/>
            <person name="Copeland A."/>
            <person name="Lucas S."/>
            <person name="Lapidus A."/>
            <person name="Barry K."/>
            <person name="Detter J.C."/>
            <person name="Glavina del Rio T."/>
            <person name="Hammon N."/>
            <person name="Israni S."/>
            <person name="Dalin E."/>
            <person name="Tice H."/>
            <person name="Pitluck S."/>
            <person name="Chain P."/>
            <person name="Malfatti S."/>
            <person name="Shin M."/>
            <person name="Vergez L."/>
            <person name="Schmutz J."/>
            <person name="Larimer F."/>
            <person name="Land M."/>
            <person name="Hauser L."/>
            <person name="Kyrpides N."/>
            <person name="Kim E."/>
            <person name="Tiedje J."/>
            <person name="Richardson P."/>
        </authorList>
    </citation>
    <scope>NUCLEOTIDE SEQUENCE [LARGE SCALE GENOMIC DNA]</scope>
    <source>
        <strain>PRwf-1</strain>
    </source>
</reference>
<keyword id="KW-0687">Ribonucleoprotein</keyword>
<keyword id="KW-0689">Ribosomal protein</keyword>
<keyword id="KW-0694">RNA-binding</keyword>
<keyword id="KW-0699">rRNA-binding</keyword>
<protein>
    <recommendedName>
        <fullName evidence="1">Large ribosomal subunit protein bL20</fullName>
    </recommendedName>
    <alternativeName>
        <fullName evidence="2">50S ribosomal protein L20</fullName>
    </alternativeName>
</protein>
<accession>A5WHW6</accession>
<dbReference type="EMBL" id="CP000713">
    <property type="protein sequence ID" value="ABQ95257.1"/>
    <property type="molecule type" value="Genomic_DNA"/>
</dbReference>
<dbReference type="SMR" id="A5WHW6"/>
<dbReference type="STRING" id="349106.PsycPRwf_2317"/>
<dbReference type="KEGG" id="prw:PsycPRwf_2317"/>
<dbReference type="eggNOG" id="COG0292">
    <property type="taxonomic scope" value="Bacteria"/>
</dbReference>
<dbReference type="HOGENOM" id="CLU_123265_0_1_6"/>
<dbReference type="GO" id="GO:1990904">
    <property type="term" value="C:ribonucleoprotein complex"/>
    <property type="evidence" value="ECO:0007669"/>
    <property type="project" value="UniProtKB-KW"/>
</dbReference>
<dbReference type="GO" id="GO:0005840">
    <property type="term" value="C:ribosome"/>
    <property type="evidence" value="ECO:0007669"/>
    <property type="project" value="UniProtKB-KW"/>
</dbReference>
<dbReference type="GO" id="GO:0019843">
    <property type="term" value="F:rRNA binding"/>
    <property type="evidence" value="ECO:0007669"/>
    <property type="project" value="UniProtKB-UniRule"/>
</dbReference>
<dbReference type="GO" id="GO:0003735">
    <property type="term" value="F:structural constituent of ribosome"/>
    <property type="evidence" value="ECO:0007669"/>
    <property type="project" value="InterPro"/>
</dbReference>
<dbReference type="GO" id="GO:0000027">
    <property type="term" value="P:ribosomal large subunit assembly"/>
    <property type="evidence" value="ECO:0007669"/>
    <property type="project" value="UniProtKB-UniRule"/>
</dbReference>
<dbReference type="GO" id="GO:0006412">
    <property type="term" value="P:translation"/>
    <property type="evidence" value="ECO:0007669"/>
    <property type="project" value="InterPro"/>
</dbReference>
<dbReference type="CDD" id="cd07026">
    <property type="entry name" value="Ribosomal_L20"/>
    <property type="match status" value="1"/>
</dbReference>
<dbReference type="FunFam" id="1.10.1900.20:FF:000001">
    <property type="entry name" value="50S ribosomal protein L20"/>
    <property type="match status" value="1"/>
</dbReference>
<dbReference type="Gene3D" id="6.10.160.10">
    <property type="match status" value="1"/>
</dbReference>
<dbReference type="Gene3D" id="1.10.1900.20">
    <property type="entry name" value="Ribosomal protein L20"/>
    <property type="match status" value="1"/>
</dbReference>
<dbReference type="HAMAP" id="MF_00382">
    <property type="entry name" value="Ribosomal_bL20"/>
    <property type="match status" value="1"/>
</dbReference>
<dbReference type="InterPro" id="IPR005813">
    <property type="entry name" value="Ribosomal_bL20"/>
</dbReference>
<dbReference type="InterPro" id="IPR049946">
    <property type="entry name" value="RIBOSOMAL_L20_CS"/>
</dbReference>
<dbReference type="InterPro" id="IPR035566">
    <property type="entry name" value="Ribosomal_protein_bL20_C"/>
</dbReference>
<dbReference type="NCBIfam" id="TIGR01032">
    <property type="entry name" value="rplT_bact"/>
    <property type="match status" value="1"/>
</dbReference>
<dbReference type="PANTHER" id="PTHR10986">
    <property type="entry name" value="39S RIBOSOMAL PROTEIN L20"/>
    <property type="match status" value="1"/>
</dbReference>
<dbReference type="Pfam" id="PF00453">
    <property type="entry name" value="Ribosomal_L20"/>
    <property type="match status" value="1"/>
</dbReference>
<dbReference type="PRINTS" id="PR00062">
    <property type="entry name" value="RIBOSOMALL20"/>
</dbReference>
<dbReference type="SUPFAM" id="SSF74731">
    <property type="entry name" value="Ribosomal protein L20"/>
    <property type="match status" value="1"/>
</dbReference>
<dbReference type="PROSITE" id="PS00937">
    <property type="entry name" value="RIBOSOMAL_L20"/>
    <property type="match status" value="1"/>
</dbReference>
<organism>
    <name type="scientific">Psychrobacter sp. (strain PRwf-1)</name>
    <dbReference type="NCBI Taxonomy" id="349106"/>
    <lineage>
        <taxon>Bacteria</taxon>
        <taxon>Pseudomonadati</taxon>
        <taxon>Pseudomonadota</taxon>
        <taxon>Gammaproteobacteria</taxon>
        <taxon>Moraxellales</taxon>
        <taxon>Moraxellaceae</taxon>
        <taxon>Psychrobacter</taxon>
    </lineage>
</organism>